<organism>
    <name type="scientific">Arabidopsis thaliana</name>
    <name type="common">Mouse-ear cress</name>
    <dbReference type="NCBI Taxonomy" id="3702"/>
    <lineage>
        <taxon>Eukaryota</taxon>
        <taxon>Viridiplantae</taxon>
        <taxon>Streptophyta</taxon>
        <taxon>Embryophyta</taxon>
        <taxon>Tracheophyta</taxon>
        <taxon>Spermatophyta</taxon>
        <taxon>Magnoliopsida</taxon>
        <taxon>eudicotyledons</taxon>
        <taxon>Gunneridae</taxon>
        <taxon>Pentapetalae</taxon>
        <taxon>rosids</taxon>
        <taxon>malvids</taxon>
        <taxon>Brassicales</taxon>
        <taxon>Brassicaceae</taxon>
        <taxon>Camelineae</taxon>
        <taxon>Arabidopsis</taxon>
    </lineage>
</organism>
<reference key="1">
    <citation type="journal article" date="2000" name="Nature">
        <title>Sequence and analysis of chromosome 1 of the plant Arabidopsis thaliana.</title>
        <authorList>
            <person name="Theologis A."/>
            <person name="Ecker J.R."/>
            <person name="Palm C.J."/>
            <person name="Federspiel N.A."/>
            <person name="Kaul S."/>
            <person name="White O."/>
            <person name="Alonso J."/>
            <person name="Altafi H."/>
            <person name="Araujo R."/>
            <person name="Bowman C.L."/>
            <person name="Brooks S.Y."/>
            <person name="Buehler E."/>
            <person name="Chan A."/>
            <person name="Chao Q."/>
            <person name="Chen H."/>
            <person name="Cheuk R.F."/>
            <person name="Chin C.W."/>
            <person name="Chung M.K."/>
            <person name="Conn L."/>
            <person name="Conway A.B."/>
            <person name="Conway A.R."/>
            <person name="Creasy T.H."/>
            <person name="Dewar K."/>
            <person name="Dunn P."/>
            <person name="Etgu P."/>
            <person name="Feldblyum T.V."/>
            <person name="Feng J.-D."/>
            <person name="Fong B."/>
            <person name="Fujii C.Y."/>
            <person name="Gill J.E."/>
            <person name="Goldsmith A.D."/>
            <person name="Haas B."/>
            <person name="Hansen N.F."/>
            <person name="Hughes B."/>
            <person name="Huizar L."/>
            <person name="Hunter J.L."/>
            <person name="Jenkins J."/>
            <person name="Johnson-Hopson C."/>
            <person name="Khan S."/>
            <person name="Khaykin E."/>
            <person name="Kim C.J."/>
            <person name="Koo H.L."/>
            <person name="Kremenetskaia I."/>
            <person name="Kurtz D.B."/>
            <person name="Kwan A."/>
            <person name="Lam B."/>
            <person name="Langin-Hooper S."/>
            <person name="Lee A."/>
            <person name="Lee J.M."/>
            <person name="Lenz C.A."/>
            <person name="Li J.H."/>
            <person name="Li Y.-P."/>
            <person name="Lin X."/>
            <person name="Liu S.X."/>
            <person name="Liu Z.A."/>
            <person name="Luros J.S."/>
            <person name="Maiti R."/>
            <person name="Marziali A."/>
            <person name="Militscher J."/>
            <person name="Miranda M."/>
            <person name="Nguyen M."/>
            <person name="Nierman W.C."/>
            <person name="Osborne B.I."/>
            <person name="Pai G."/>
            <person name="Peterson J."/>
            <person name="Pham P.K."/>
            <person name="Rizzo M."/>
            <person name="Rooney T."/>
            <person name="Rowley D."/>
            <person name="Sakano H."/>
            <person name="Salzberg S.L."/>
            <person name="Schwartz J.R."/>
            <person name="Shinn P."/>
            <person name="Southwick A.M."/>
            <person name="Sun H."/>
            <person name="Tallon L.J."/>
            <person name="Tambunga G."/>
            <person name="Toriumi M.J."/>
            <person name="Town C.D."/>
            <person name="Utterback T."/>
            <person name="Van Aken S."/>
            <person name="Vaysberg M."/>
            <person name="Vysotskaia V.S."/>
            <person name="Walker M."/>
            <person name="Wu D."/>
            <person name="Yu G."/>
            <person name="Fraser C.M."/>
            <person name="Venter J.C."/>
            <person name="Davis R.W."/>
        </authorList>
    </citation>
    <scope>NUCLEOTIDE SEQUENCE [LARGE SCALE GENOMIC DNA]</scope>
    <source>
        <strain>cv. Columbia</strain>
    </source>
</reference>
<reference key="2">
    <citation type="journal article" date="2017" name="Plant J.">
        <title>Araport11: a complete reannotation of the Arabidopsis thaliana reference genome.</title>
        <authorList>
            <person name="Cheng C.Y."/>
            <person name="Krishnakumar V."/>
            <person name="Chan A.P."/>
            <person name="Thibaud-Nissen F."/>
            <person name="Schobel S."/>
            <person name="Town C.D."/>
        </authorList>
    </citation>
    <scope>GENOME REANNOTATION</scope>
    <source>
        <strain>cv. Columbia</strain>
    </source>
</reference>
<reference key="3">
    <citation type="journal article" date="2003" name="Science">
        <title>Empirical analysis of transcriptional activity in the Arabidopsis genome.</title>
        <authorList>
            <person name="Yamada K."/>
            <person name="Lim J."/>
            <person name="Dale J.M."/>
            <person name="Chen H."/>
            <person name="Shinn P."/>
            <person name="Palm C.J."/>
            <person name="Southwick A.M."/>
            <person name="Wu H.C."/>
            <person name="Kim C.J."/>
            <person name="Nguyen M."/>
            <person name="Pham P.K."/>
            <person name="Cheuk R.F."/>
            <person name="Karlin-Newmann G."/>
            <person name="Liu S.X."/>
            <person name="Lam B."/>
            <person name="Sakano H."/>
            <person name="Wu T."/>
            <person name="Yu G."/>
            <person name="Miranda M."/>
            <person name="Quach H.L."/>
            <person name="Tripp M."/>
            <person name="Chang C.H."/>
            <person name="Lee J.M."/>
            <person name="Toriumi M.J."/>
            <person name="Chan M.M."/>
            <person name="Tang C.C."/>
            <person name="Onodera C.S."/>
            <person name="Deng J.M."/>
            <person name="Akiyama K."/>
            <person name="Ansari Y."/>
            <person name="Arakawa T."/>
            <person name="Banh J."/>
            <person name="Banno F."/>
            <person name="Bowser L."/>
            <person name="Brooks S.Y."/>
            <person name="Carninci P."/>
            <person name="Chao Q."/>
            <person name="Choy N."/>
            <person name="Enju A."/>
            <person name="Goldsmith A.D."/>
            <person name="Gurjal M."/>
            <person name="Hansen N.F."/>
            <person name="Hayashizaki Y."/>
            <person name="Johnson-Hopson C."/>
            <person name="Hsuan V.W."/>
            <person name="Iida K."/>
            <person name="Karnes M."/>
            <person name="Khan S."/>
            <person name="Koesema E."/>
            <person name="Ishida J."/>
            <person name="Jiang P.X."/>
            <person name="Jones T."/>
            <person name="Kawai J."/>
            <person name="Kamiya A."/>
            <person name="Meyers C."/>
            <person name="Nakajima M."/>
            <person name="Narusaka M."/>
            <person name="Seki M."/>
            <person name="Sakurai T."/>
            <person name="Satou M."/>
            <person name="Tamse R."/>
            <person name="Vaysberg M."/>
            <person name="Wallender E.K."/>
            <person name="Wong C."/>
            <person name="Yamamura Y."/>
            <person name="Yuan S."/>
            <person name="Shinozaki K."/>
            <person name="Davis R.W."/>
            <person name="Theologis A."/>
            <person name="Ecker J.R."/>
        </authorList>
    </citation>
    <scope>NUCLEOTIDE SEQUENCE [LARGE SCALE MRNA] OF 802-1340</scope>
    <source>
        <strain>cv. Columbia</strain>
    </source>
</reference>
<reference key="4">
    <citation type="journal article" date="2007" name="Trends Plant Sci.">
        <title>Arabidopsis PPP family of serine/threonine phosphatases.</title>
        <authorList>
            <person name="Farkas I."/>
            <person name="Dombradi V."/>
            <person name="Miskei M."/>
            <person name="Szabados L."/>
            <person name="Koncz C."/>
        </authorList>
    </citation>
    <scope>GENE FAMILY</scope>
    <scope>NOMENCLATURE</scope>
</reference>
<reference key="5">
    <citation type="journal article" date="2014" name="Plant J.">
        <title>MAIN-LIKE1 is a crucial factor for correct cell division and differentiation in Arabidopsis thaliana.</title>
        <authorList>
            <person name="Uehlken C."/>
            <person name="Horvath B."/>
            <person name="Stadler R."/>
            <person name="Sauer N."/>
            <person name="Weingartner M."/>
        </authorList>
    </citation>
    <scope>SUBCELLULAR LOCATION</scope>
    <scope>TISSUE SPECIFICITY</scope>
    <scope>DISRUPTION PHENOTYPE</scope>
</reference>
<sequence>MEVQSLLNFDLDPGPVDQSILVWQHEHRSAAIWEDEVPPRELTCRHKLLGMRDWPLDPLVCQKLIEFGLYGVYKVAFIQLDYALITALVERWRPETHTFHLPAGEITVTLQDVNILLGLRVDGPAVTGSTKYNWADLCEDLLGHRPGPKDLHGSHVSLAWLRENFRNLPADPDEVTLKCHTRAFVLALMSGFLYGDKSKHDVALTFLPLLRDFDEVAKLSWGSATLALLYRELCRASKRTVSTICGPLVLLQLWAWERLHVGRPGRLKDVGASYMDGIDGPLPDPLGCRWRASLSHKENPRGGLDFYRDQFDQQKDEQVIWQPYTPDLLAKIPLICVSGENIWRTVAPLICFDVVEWHRPDRVLRQFGLHQTIPAPCDNEKALHAIDKRGKSEYDWSARHSRHIGLWEARVSSVVSGEPECSPMDYNDPYMEWYRRITRRIISPMNERRPGQFLPTGFAFQVLVQRVAAIHARSRASLEEELTVGSARQTLQDIVDMCAGALQLNAPLGSLSNGSVAQAPTPEPFLMLPQPTPTIIPQKPMGGEMVCLPLNDMEIDDGLAAEPLELMPPVQDIGCEQSLSSVSQKPLFWPSGGKLTFSWVCEVMLVFDWSSKNLPPCEFSSVLPFNVLDELVLFASKILKKEPNCVRIDSEKAEVVVVGDLHGQLHDLLYLMQDAGFPDGDRFYVFNGNYVDIGAWGLETFLLLLSWKVLLPARVYLLRGSHESESCTSMYGFKNEVLTKYGDKGAAVYKKCLECFQLLPLASVIAGKVYTAHGGLFRDVSSFLSDKQERNRKRKRTQKKQTDNTVLDTEDRSESLPLGSLKDLSKVKRRVIDPPTEGSNLIPGDILWSDPSKDTGLFLNKERGIGLLWGPDCTAKFLQDNNLKWIIRGKGAPDERAKRDDLAPMNGGYAEDHEGLITLFSAPDHPQFQDTEERHNNKAAYIILQIPECEELKFQPLEAVSPRPKAEAYYDFRRLIHPPSNLVHNITNSVDSPSSVPDDKDNLISSENVEYKSMDLSEQMEVDEKDDVDSKYSESITDEVAAFGTPASGDRDMVDFSDKTENGSKEADHSETAEISKDLSDTVGKPESCSRTRGTYEAIGTDAKLKSNTPEAINLEPQPGCDLYVPDSGNSTESRTEKAAEEACVGRISIDDCSTTGDAAVELEITYDEKLDRVVTEITGNDAAECMTDGNRDIATDGAENLEPSTSKLNYSEPSEDIDDSTMKFRHNTSCVADSDLETVNGGVNADCSSSSKCLTSKPVVAHDKFTNLTKPSHDKGYGESADKPERVIKLVTYSKRKSSDKKHMIESNEDPQQKVNDSVDSKNKGSLDKSQSVPGDMDS</sequence>
<evidence type="ECO:0000250" key="1"/>
<evidence type="ECO:0000250" key="2">
    <source>
        <dbReference type="UniProtKB" id="Q9LMT7"/>
    </source>
</evidence>
<evidence type="ECO:0000255" key="3"/>
<evidence type="ECO:0000256" key="4">
    <source>
        <dbReference type="SAM" id="MobiDB-lite"/>
    </source>
</evidence>
<evidence type="ECO:0000269" key="5">
    <source>
    </source>
</evidence>
<evidence type="ECO:0000303" key="6">
    <source>
    </source>
</evidence>
<evidence type="ECO:0000305" key="7"/>
<feature type="chain" id="PRO_0000308992" description="Serine/threonine-protein phosphatase 7 long form homolog">
    <location>
        <begin position="1"/>
        <end position="1340"/>
    </location>
</feature>
<feature type="region of interest" description="Disordered" evidence="4">
    <location>
        <begin position="788"/>
        <end position="814"/>
    </location>
</feature>
<feature type="region of interest" description="Disordered" evidence="4">
    <location>
        <begin position="1012"/>
        <end position="1093"/>
    </location>
</feature>
<feature type="region of interest" description="Disordered" evidence="4">
    <location>
        <begin position="1196"/>
        <end position="1218"/>
    </location>
</feature>
<feature type="region of interest" description="Disordered" evidence="4">
    <location>
        <begin position="1266"/>
        <end position="1340"/>
    </location>
</feature>
<feature type="compositionally biased region" description="Basic residues" evidence="4">
    <location>
        <begin position="790"/>
        <end position="799"/>
    </location>
</feature>
<feature type="compositionally biased region" description="Acidic residues" evidence="4">
    <location>
        <begin position="1018"/>
        <end position="1027"/>
    </location>
</feature>
<feature type="compositionally biased region" description="Basic and acidic residues" evidence="4">
    <location>
        <begin position="1049"/>
        <end position="1080"/>
    </location>
</feature>
<feature type="compositionally biased region" description="Polar residues" evidence="4">
    <location>
        <begin position="1203"/>
        <end position="1213"/>
    </location>
</feature>
<feature type="compositionally biased region" description="Basic and acidic residues" evidence="4">
    <location>
        <begin position="1266"/>
        <end position="1289"/>
    </location>
</feature>
<feature type="compositionally biased region" description="Basic and acidic residues" evidence="4">
    <location>
        <begin position="1318"/>
        <end position="1328"/>
    </location>
</feature>
<feature type="active site" description="Proton donor" evidence="1">
    <location>
        <position position="722"/>
    </location>
</feature>
<feature type="binding site" evidence="3">
    <location>
        <position position="660"/>
    </location>
    <ligand>
        <name>Mn(2+)</name>
        <dbReference type="ChEBI" id="CHEBI:29035"/>
    </ligand>
</feature>
<feature type="binding site" evidence="3">
    <location>
        <position position="662"/>
    </location>
    <ligand>
        <name>Mn(2+)</name>
        <dbReference type="ChEBI" id="CHEBI:29035"/>
    </ligand>
</feature>
<feature type="binding site" evidence="3">
    <location>
        <position position="773"/>
    </location>
    <ligand>
        <name>Mn(2+)</name>
        <dbReference type="ChEBI" id="CHEBI:29035"/>
    </ligand>
</feature>
<gene>
    <name evidence="6" type="primary">MAIL3</name>
    <name type="ordered locus">At1g48120</name>
    <name type="ORF">F21D18.16</name>
</gene>
<proteinExistence type="evidence at transcript level"/>
<comment type="function">
    <text evidence="2">Maybe required to maintain cell division activity in meristematic cells.</text>
</comment>
<comment type="catalytic activity">
    <reaction>
        <text>O-phospho-L-seryl-[protein] + H2O = L-seryl-[protein] + phosphate</text>
        <dbReference type="Rhea" id="RHEA:20629"/>
        <dbReference type="Rhea" id="RHEA-COMP:9863"/>
        <dbReference type="Rhea" id="RHEA-COMP:11604"/>
        <dbReference type="ChEBI" id="CHEBI:15377"/>
        <dbReference type="ChEBI" id="CHEBI:29999"/>
        <dbReference type="ChEBI" id="CHEBI:43474"/>
        <dbReference type="ChEBI" id="CHEBI:83421"/>
        <dbReference type="EC" id="3.1.3.16"/>
    </reaction>
</comment>
<comment type="catalytic activity">
    <reaction>
        <text>O-phospho-L-threonyl-[protein] + H2O = L-threonyl-[protein] + phosphate</text>
        <dbReference type="Rhea" id="RHEA:47004"/>
        <dbReference type="Rhea" id="RHEA-COMP:11060"/>
        <dbReference type="Rhea" id="RHEA-COMP:11605"/>
        <dbReference type="ChEBI" id="CHEBI:15377"/>
        <dbReference type="ChEBI" id="CHEBI:30013"/>
        <dbReference type="ChEBI" id="CHEBI:43474"/>
        <dbReference type="ChEBI" id="CHEBI:61977"/>
        <dbReference type="EC" id="3.1.3.16"/>
    </reaction>
</comment>
<comment type="cofactor">
    <cofactor evidence="7">
        <name>Mn(2+)</name>
        <dbReference type="ChEBI" id="CHEBI:29035"/>
    </cofactor>
</comment>
<comment type="subcellular location">
    <subcellularLocation>
        <location evidence="5">Nucleus</location>
    </subcellularLocation>
</comment>
<comment type="tissue specificity">
    <text evidence="5">Expressed in root tips, the shoot apical meristem (SAM), leaf vasculature, hydathodes and mature flowers.</text>
</comment>
<comment type="disruption phenotype">
    <text evidence="5">No visible phenotype under normal growth conditions.</text>
</comment>
<comment type="similarity">
    <text evidence="7">Belongs to the PPP phosphatase family. PP-7 subfamily.</text>
</comment>
<accession>Q9LNG5</accession>
<keyword id="KW-0378">Hydrolase</keyword>
<keyword id="KW-0464">Manganese</keyword>
<keyword id="KW-0479">Metal-binding</keyword>
<keyword id="KW-0539">Nucleus</keyword>
<keyword id="KW-0904">Protein phosphatase</keyword>
<keyword id="KW-1185">Reference proteome</keyword>
<dbReference type="EC" id="3.1.3.16"/>
<dbReference type="EMBL" id="AC023673">
    <property type="protein sequence ID" value="AAF79521.1"/>
    <property type="molecule type" value="Genomic_DNA"/>
</dbReference>
<dbReference type="EMBL" id="CP002684">
    <property type="protein sequence ID" value="AEE32251.1"/>
    <property type="molecule type" value="Genomic_DNA"/>
</dbReference>
<dbReference type="EMBL" id="AY064134">
    <property type="status" value="NOT_ANNOTATED_CDS"/>
    <property type="molecule type" value="mRNA"/>
</dbReference>
<dbReference type="PIR" id="D96521">
    <property type="entry name" value="D96521"/>
</dbReference>
<dbReference type="RefSeq" id="NP_175246.2">
    <property type="nucleotide sequence ID" value="NM_103708.4"/>
</dbReference>
<dbReference type="SMR" id="Q9LNG5"/>
<dbReference type="BioGRID" id="26455">
    <property type="interactions" value="1"/>
</dbReference>
<dbReference type="FunCoup" id="Q9LNG5">
    <property type="interactions" value="5"/>
</dbReference>
<dbReference type="STRING" id="3702.Q9LNG5"/>
<dbReference type="GlyGen" id="Q9LNG5">
    <property type="glycosylation" value="1 site"/>
</dbReference>
<dbReference type="iPTMnet" id="Q9LNG5"/>
<dbReference type="PaxDb" id="3702-AT1G48120.1"/>
<dbReference type="ProteomicsDB" id="236588"/>
<dbReference type="EnsemblPlants" id="AT1G48120.1">
    <property type="protein sequence ID" value="AT1G48120.1"/>
    <property type="gene ID" value="AT1G48120"/>
</dbReference>
<dbReference type="GeneID" id="841230"/>
<dbReference type="Gramene" id="AT1G48120.1">
    <property type="protein sequence ID" value="AT1G48120.1"/>
    <property type="gene ID" value="AT1G48120"/>
</dbReference>
<dbReference type="KEGG" id="ath:AT1G48120"/>
<dbReference type="Araport" id="AT1G48120"/>
<dbReference type="TAIR" id="AT1G48120">
    <property type="gene designation" value="MAIL3"/>
</dbReference>
<dbReference type="eggNOG" id="KOG0376">
    <property type="taxonomic scope" value="Eukaryota"/>
</dbReference>
<dbReference type="HOGENOM" id="CLU_005979_0_0_1"/>
<dbReference type="InParanoid" id="Q9LNG5"/>
<dbReference type="OMA" id="KCHTRAF"/>
<dbReference type="PRO" id="PR:Q9LNG5"/>
<dbReference type="Proteomes" id="UP000006548">
    <property type="component" value="Chromosome 1"/>
</dbReference>
<dbReference type="ExpressionAtlas" id="Q9LNG5">
    <property type="expression patterns" value="baseline and differential"/>
</dbReference>
<dbReference type="GO" id="GO:0005634">
    <property type="term" value="C:nucleus"/>
    <property type="evidence" value="ECO:0007669"/>
    <property type="project" value="UniProtKB-SubCell"/>
</dbReference>
<dbReference type="GO" id="GO:0046872">
    <property type="term" value="F:metal ion binding"/>
    <property type="evidence" value="ECO:0007669"/>
    <property type="project" value="UniProtKB-KW"/>
</dbReference>
<dbReference type="GO" id="GO:0004722">
    <property type="term" value="F:protein serine/threonine phosphatase activity"/>
    <property type="evidence" value="ECO:0007669"/>
    <property type="project" value="UniProtKB-EC"/>
</dbReference>
<dbReference type="CDD" id="cd07418">
    <property type="entry name" value="MPP_PP7"/>
    <property type="match status" value="1"/>
</dbReference>
<dbReference type="Gene3D" id="3.60.21.10">
    <property type="match status" value="1"/>
</dbReference>
<dbReference type="InterPro" id="IPR019557">
    <property type="entry name" value="AminoTfrase-like_pln_mobile"/>
</dbReference>
<dbReference type="InterPro" id="IPR004843">
    <property type="entry name" value="Calcineurin-like_PHP_ApaH"/>
</dbReference>
<dbReference type="InterPro" id="IPR029052">
    <property type="entry name" value="Metallo-depent_PP-like"/>
</dbReference>
<dbReference type="InterPro" id="IPR041754">
    <property type="entry name" value="MPP_PP7"/>
</dbReference>
<dbReference type="InterPro" id="IPR051134">
    <property type="entry name" value="PPP_phosphatase"/>
</dbReference>
<dbReference type="InterPro" id="IPR006186">
    <property type="entry name" value="Ser/Thr-sp_prot-phosphatase"/>
</dbReference>
<dbReference type="PANTHER" id="PTHR45668">
    <property type="entry name" value="SERINE/THREONINE-PROTEIN PHOSPHATASE 5-RELATED"/>
    <property type="match status" value="1"/>
</dbReference>
<dbReference type="PANTHER" id="PTHR45668:SF7">
    <property type="entry name" value="SERINE_THREONINE-PROTEIN PHOSPHATASE 7 LONG FORM HOMOLOG"/>
    <property type="match status" value="1"/>
</dbReference>
<dbReference type="Pfam" id="PF00149">
    <property type="entry name" value="Metallophos"/>
    <property type="match status" value="1"/>
</dbReference>
<dbReference type="Pfam" id="PF10536">
    <property type="entry name" value="PMD"/>
    <property type="match status" value="1"/>
</dbReference>
<dbReference type="PRINTS" id="PR00114">
    <property type="entry name" value="STPHPHTASE"/>
</dbReference>
<dbReference type="SMART" id="SM00156">
    <property type="entry name" value="PP2Ac"/>
    <property type="match status" value="1"/>
</dbReference>
<dbReference type="SUPFAM" id="SSF56300">
    <property type="entry name" value="Metallo-dependent phosphatases"/>
    <property type="match status" value="1"/>
</dbReference>
<name>PPP7L_ARATH</name>
<protein>
    <recommendedName>
        <fullName>Serine/threonine-protein phosphatase 7 long form homolog</fullName>
        <ecNumber>3.1.3.16</ecNumber>
    </recommendedName>
    <alternativeName>
        <fullName evidence="6">Protein MAIN-LIKE 3</fullName>
    </alternativeName>
</protein>